<dbReference type="EMBL" id="AP007281">
    <property type="protein sequence ID" value="BAG25905.1"/>
    <property type="molecule type" value="Genomic_DNA"/>
</dbReference>
<dbReference type="RefSeq" id="WP_003664558.1">
    <property type="nucleotide sequence ID" value="NC_010609.1"/>
</dbReference>
<dbReference type="SMR" id="B2G8X3"/>
<dbReference type="GeneID" id="77191474"/>
<dbReference type="KEGG" id="lrf:LAR_1389"/>
<dbReference type="HOGENOM" id="CLU_083987_3_3_9"/>
<dbReference type="GO" id="GO:0022625">
    <property type="term" value="C:cytosolic large ribosomal subunit"/>
    <property type="evidence" value="ECO:0007669"/>
    <property type="project" value="TreeGrafter"/>
</dbReference>
<dbReference type="GO" id="GO:0019843">
    <property type="term" value="F:rRNA binding"/>
    <property type="evidence" value="ECO:0007669"/>
    <property type="project" value="UniProtKB-UniRule"/>
</dbReference>
<dbReference type="GO" id="GO:0003735">
    <property type="term" value="F:structural constituent of ribosome"/>
    <property type="evidence" value="ECO:0007669"/>
    <property type="project" value="InterPro"/>
</dbReference>
<dbReference type="GO" id="GO:0006412">
    <property type="term" value="P:translation"/>
    <property type="evidence" value="ECO:0007669"/>
    <property type="project" value="UniProtKB-UniRule"/>
</dbReference>
<dbReference type="CDD" id="cd00336">
    <property type="entry name" value="Ribosomal_L22"/>
    <property type="match status" value="1"/>
</dbReference>
<dbReference type="FunFam" id="3.90.470.10:FF:000001">
    <property type="entry name" value="50S ribosomal protein L22"/>
    <property type="match status" value="1"/>
</dbReference>
<dbReference type="Gene3D" id="3.90.470.10">
    <property type="entry name" value="Ribosomal protein L22/L17"/>
    <property type="match status" value="1"/>
</dbReference>
<dbReference type="HAMAP" id="MF_01331_B">
    <property type="entry name" value="Ribosomal_uL22_B"/>
    <property type="match status" value="1"/>
</dbReference>
<dbReference type="InterPro" id="IPR001063">
    <property type="entry name" value="Ribosomal_uL22"/>
</dbReference>
<dbReference type="InterPro" id="IPR005727">
    <property type="entry name" value="Ribosomal_uL22_bac/chlpt-type"/>
</dbReference>
<dbReference type="InterPro" id="IPR047867">
    <property type="entry name" value="Ribosomal_uL22_bac/org-type"/>
</dbReference>
<dbReference type="InterPro" id="IPR018260">
    <property type="entry name" value="Ribosomal_uL22_CS"/>
</dbReference>
<dbReference type="InterPro" id="IPR036394">
    <property type="entry name" value="Ribosomal_uL22_sf"/>
</dbReference>
<dbReference type="NCBIfam" id="TIGR01044">
    <property type="entry name" value="rplV_bact"/>
    <property type="match status" value="1"/>
</dbReference>
<dbReference type="PANTHER" id="PTHR13501">
    <property type="entry name" value="CHLOROPLAST 50S RIBOSOMAL PROTEIN L22-RELATED"/>
    <property type="match status" value="1"/>
</dbReference>
<dbReference type="PANTHER" id="PTHR13501:SF8">
    <property type="entry name" value="LARGE RIBOSOMAL SUBUNIT PROTEIN UL22M"/>
    <property type="match status" value="1"/>
</dbReference>
<dbReference type="Pfam" id="PF00237">
    <property type="entry name" value="Ribosomal_L22"/>
    <property type="match status" value="1"/>
</dbReference>
<dbReference type="SUPFAM" id="SSF54843">
    <property type="entry name" value="Ribosomal protein L22"/>
    <property type="match status" value="1"/>
</dbReference>
<dbReference type="PROSITE" id="PS00464">
    <property type="entry name" value="RIBOSOMAL_L22"/>
    <property type="match status" value="1"/>
</dbReference>
<comment type="function">
    <text evidence="1">This protein binds specifically to 23S rRNA; its binding is stimulated by other ribosomal proteins, e.g. L4, L17, and L20. It is important during the early stages of 50S assembly. It makes multiple contacts with different domains of the 23S rRNA in the assembled 50S subunit and ribosome (By similarity).</text>
</comment>
<comment type="function">
    <text evidence="1">The globular domain of the protein is located near the polypeptide exit tunnel on the outside of the subunit, while an extended beta-hairpin is found that lines the wall of the exit tunnel in the center of the 70S ribosome.</text>
</comment>
<comment type="subunit">
    <text evidence="1">Part of the 50S ribosomal subunit.</text>
</comment>
<comment type="similarity">
    <text evidence="1">Belongs to the universal ribosomal protein uL22 family.</text>
</comment>
<reference key="1">
    <citation type="journal article" date="2008" name="DNA Res.">
        <title>Comparative genome analysis of Lactobacillus reuteri and Lactobacillus fermentum reveal a genomic island for reuterin and cobalamin production.</title>
        <authorList>
            <person name="Morita H."/>
            <person name="Toh H."/>
            <person name="Fukuda S."/>
            <person name="Horikawa H."/>
            <person name="Oshima K."/>
            <person name="Suzuki T."/>
            <person name="Murakami M."/>
            <person name="Hisamatsu S."/>
            <person name="Kato Y."/>
            <person name="Takizawa T."/>
            <person name="Fukuoka H."/>
            <person name="Yoshimura T."/>
            <person name="Itoh K."/>
            <person name="O'Sullivan D.J."/>
            <person name="McKay L.L."/>
            <person name="Ohno H."/>
            <person name="Kikuchi J."/>
            <person name="Masaoka T."/>
            <person name="Hattori M."/>
        </authorList>
    </citation>
    <scope>NUCLEOTIDE SEQUENCE [LARGE SCALE GENOMIC DNA]</scope>
    <source>
        <strain>JCM 1112</strain>
    </source>
</reference>
<proteinExistence type="inferred from homology"/>
<accession>B2G8X3</accession>
<keyword id="KW-0687">Ribonucleoprotein</keyword>
<keyword id="KW-0689">Ribosomal protein</keyword>
<keyword id="KW-0694">RNA-binding</keyword>
<keyword id="KW-0699">rRNA-binding</keyword>
<protein>
    <recommendedName>
        <fullName evidence="1">Large ribosomal subunit protein uL22</fullName>
    </recommendedName>
    <alternativeName>
        <fullName evidence="2">50S ribosomal protein L22</fullName>
    </alternativeName>
</protein>
<organism>
    <name type="scientific">Limosilactobacillus reuteri subsp. reuteri (strain JCM 1112)</name>
    <name type="common">Lactobacillus reuteri</name>
    <dbReference type="NCBI Taxonomy" id="557433"/>
    <lineage>
        <taxon>Bacteria</taxon>
        <taxon>Bacillati</taxon>
        <taxon>Bacillota</taxon>
        <taxon>Bacilli</taxon>
        <taxon>Lactobacillales</taxon>
        <taxon>Lactobacillaceae</taxon>
        <taxon>Limosilactobacillus</taxon>
    </lineage>
</organism>
<name>RL22_LIMRJ</name>
<gene>
    <name evidence="1" type="primary">rplV</name>
    <name type="ordered locus">LAR_1389</name>
</gene>
<feature type="chain" id="PRO_1000142277" description="Large ribosomal subunit protein uL22">
    <location>
        <begin position="1"/>
        <end position="115"/>
    </location>
</feature>
<evidence type="ECO:0000255" key="1">
    <source>
        <dbReference type="HAMAP-Rule" id="MF_01331"/>
    </source>
</evidence>
<evidence type="ECO:0000305" key="2"/>
<sequence length="115" mass="12394">MAENITSAKATAKMVRVSARKVRLVLDAIRGKSVAEAFAILKFTPRGAASDVEKVLKSAVANAENNFDLDRASLVVSEAFANEGPTLKRFRPRAKGSASPINKRTSHITVVVTER</sequence>